<gene>
    <name evidence="1" type="primary">scpB</name>
    <name type="ordered locus">MPN_301</name>
    <name type="ORF">MP535</name>
</gene>
<comment type="function">
    <text evidence="1">Participates in chromosomal partition during cell division. May act via the formation of a condensin-like complex containing Smc and ScpA that pull DNA away from mid-cell into both cell halves.</text>
</comment>
<comment type="subunit">
    <text evidence="1">Homodimer. Homodimerization may be required to stabilize the binding of ScpA to the Smc head domains. Component of a cohesin-like complex composed of ScpA, ScpB and the Smc homodimer, in which ScpA and ScpB bind to the head domain of Smc. The presence of the three proteins is required for the association of the complex with DNA.</text>
</comment>
<comment type="subcellular location">
    <subcellularLocation>
        <location evidence="1">Cytoplasm</location>
    </subcellularLocation>
    <text evidence="1">Associated with two foci at the outer edges of the nucleoid region in young cells, and at four foci within both cell halves in older cells.</text>
</comment>
<comment type="similarity">
    <text evidence="1">Belongs to the ScpB family.</text>
</comment>
<name>SCPB_MYCPN</name>
<dbReference type="EMBL" id="U00089">
    <property type="protein sequence ID" value="AAB96183.1"/>
    <property type="molecule type" value="Genomic_DNA"/>
</dbReference>
<dbReference type="PIR" id="S73861">
    <property type="entry name" value="S73861"/>
</dbReference>
<dbReference type="RefSeq" id="NP_109989.1">
    <property type="nucleotide sequence ID" value="NC_000912.1"/>
</dbReference>
<dbReference type="RefSeq" id="WP_010874658.1">
    <property type="nucleotide sequence ID" value="NZ_OU342337.1"/>
</dbReference>
<dbReference type="SMR" id="P75477"/>
<dbReference type="IntAct" id="P75477">
    <property type="interactions" value="1"/>
</dbReference>
<dbReference type="STRING" id="272634.MPN_301"/>
<dbReference type="EnsemblBacteria" id="AAB96183">
    <property type="protein sequence ID" value="AAB96183"/>
    <property type="gene ID" value="MPN_301"/>
</dbReference>
<dbReference type="GeneID" id="66609052"/>
<dbReference type="KEGG" id="mpn:MPN_301"/>
<dbReference type="PATRIC" id="fig|272634.6.peg.325"/>
<dbReference type="HOGENOM" id="CLU_045647_5_3_14"/>
<dbReference type="OrthoDB" id="9806226at2"/>
<dbReference type="BioCyc" id="MPNE272634:G1GJ3-470-MONOMER"/>
<dbReference type="Proteomes" id="UP000000808">
    <property type="component" value="Chromosome"/>
</dbReference>
<dbReference type="GO" id="GO:0005737">
    <property type="term" value="C:cytoplasm"/>
    <property type="evidence" value="ECO:0007669"/>
    <property type="project" value="UniProtKB-SubCell"/>
</dbReference>
<dbReference type="GO" id="GO:0051301">
    <property type="term" value="P:cell division"/>
    <property type="evidence" value="ECO:0007669"/>
    <property type="project" value="UniProtKB-KW"/>
</dbReference>
<dbReference type="GO" id="GO:0051304">
    <property type="term" value="P:chromosome separation"/>
    <property type="evidence" value="ECO:0007669"/>
    <property type="project" value="InterPro"/>
</dbReference>
<dbReference type="GO" id="GO:0006260">
    <property type="term" value="P:DNA replication"/>
    <property type="evidence" value="ECO:0007669"/>
    <property type="project" value="UniProtKB-UniRule"/>
</dbReference>
<dbReference type="Gene3D" id="1.10.10.10">
    <property type="entry name" value="Winged helix-like DNA-binding domain superfamily/Winged helix DNA-binding domain"/>
    <property type="match status" value="2"/>
</dbReference>
<dbReference type="HAMAP" id="MF_01804">
    <property type="entry name" value="ScpB"/>
    <property type="match status" value="1"/>
</dbReference>
<dbReference type="InterPro" id="IPR005234">
    <property type="entry name" value="ScpB_csome_segregation"/>
</dbReference>
<dbReference type="InterPro" id="IPR036388">
    <property type="entry name" value="WH-like_DNA-bd_sf"/>
</dbReference>
<dbReference type="InterPro" id="IPR036390">
    <property type="entry name" value="WH_DNA-bd_sf"/>
</dbReference>
<dbReference type="NCBIfam" id="TIGR00281">
    <property type="entry name" value="SMC-Scp complex subunit ScpB"/>
    <property type="match status" value="1"/>
</dbReference>
<dbReference type="PANTHER" id="PTHR34298">
    <property type="entry name" value="SEGREGATION AND CONDENSATION PROTEIN B"/>
    <property type="match status" value="1"/>
</dbReference>
<dbReference type="PANTHER" id="PTHR34298:SF2">
    <property type="entry name" value="SEGREGATION AND CONDENSATION PROTEIN B"/>
    <property type="match status" value="1"/>
</dbReference>
<dbReference type="Pfam" id="PF04079">
    <property type="entry name" value="SMC_ScpB"/>
    <property type="match status" value="1"/>
</dbReference>
<dbReference type="PIRSF" id="PIRSF019345">
    <property type="entry name" value="ScpB"/>
    <property type="match status" value="1"/>
</dbReference>
<dbReference type="SUPFAM" id="SSF46785">
    <property type="entry name" value="Winged helix' DNA-binding domain"/>
    <property type="match status" value="2"/>
</dbReference>
<keyword id="KW-0131">Cell cycle</keyword>
<keyword id="KW-0132">Cell division</keyword>
<keyword id="KW-0159">Chromosome partition</keyword>
<keyword id="KW-0963">Cytoplasm</keyword>
<keyword id="KW-1185">Reference proteome</keyword>
<accession>P75477</accession>
<protein>
    <recommendedName>
        <fullName evidence="1">Segregation and condensation protein B</fullName>
    </recommendedName>
</protein>
<evidence type="ECO:0000255" key="1">
    <source>
        <dbReference type="HAMAP-Rule" id="MF_01804"/>
    </source>
</evidence>
<feature type="chain" id="PRO_0000211142" description="Segregation and condensation protein B">
    <location>
        <begin position="1"/>
        <end position="208"/>
    </location>
</feature>
<organism>
    <name type="scientific">Mycoplasma pneumoniae (strain ATCC 29342 / M129 / Subtype 1)</name>
    <name type="common">Mycoplasmoides pneumoniae</name>
    <dbReference type="NCBI Taxonomy" id="272634"/>
    <lineage>
        <taxon>Bacteria</taxon>
        <taxon>Bacillati</taxon>
        <taxon>Mycoplasmatota</taxon>
        <taxon>Mycoplasmoidales</taxon>
        <taxon>Mycoplasmoidaceae</taxon>
        <taxon>Mycoplasmoides</taxon>
    </lineage>
</organism>
<proteinExistence type="inferred from homology"/>
<reference key="1">
    <citation type="journal article" date="1996" name="Nucleic Acids Res.">
        <title>Complete sequence analysis of the genome of the bacterium Mycoplasma pneumoniae.</title>
        <authorList>
            <person name="Himmelreich R."/>
            <person name="Hilbert H."/>
            <person name="Plagens H."/>
            <person name="Pirkl E."/>
            <person name="Li B.-C."/>
            <person name="Herrmann R."/>
        </authorList>
    </citation>
    <scope>NUCLEOTIDE SEQUENCE [LARGE SCALE GENOMIC DNA]</scope>
    <source>
        <strain>ATCC 29342 / M129 / Subtype 1</strain>
    </source>
</reference>
<sequence length="208" mass="23681">MDATIKVTKPVLKQKDSSAANLVAAIYGLLFVSGEKGLTLAELNRVLRKVGLEKIKAALVQLERKLSLDDESGIEIKKFGHSFRLVTKMEIKDFIHRYLPNKIKNPLNSKTMEVLAIIAYNQPCTRPRINEIRGADSFQIVDDLLEKELIVELGRKDTPGRPFIYEVSPKFYDLFGINSLDELPKVENFDLDKFRQGSFFDSNRYGDD</sequence>